<name>EABN1_BACSU</name>
<feature type="signal peptide" evidence="4">
    <location>
        <begin position="1"/>
        <end position="32"/>
    </location>
</feature>
<feature type="chain" id="PRO_0000360437" description="Extracellular endo-alpha-(1-&gt;5)-L-arabinanase 1">
    <location>
        <begin position="33"/>
        <end position="323"/>
    </location>
</feature>
<feature type="active site" description="Proton acceptor" evidence="7">
    <location>
        <position position="44"/>
    </location>
</feature>
<feature type="active site" description="Proton donor" evidence="7">
    <location>
        <position position="215"/>
    </location>
</feature>
<feature type="binding site" evidence="1">
    <location>
        <position position="44"/>
    </location>
    <ligand>
        <name>substrate</name>
    </ligand>
</feature>
<feature type="binding site" evidence="2">
    <location>
        <position position="107"/>
    </location>
    <ligand>
        <name>Ca(2+)</name>
        <dbReference type="ChEBI" id="CHEBI:29108"/>
    </ligand>
</feature>
<feature type="binding site" evidence="1">
    <location>
        <position position="125"/>
    </location>
    <ligand>
        <name>substrate</name>
    </ligand>
</feature>
<feature type="binding site" evidence="1">
    <location>
        <begin position="160"/>
        <end position="163"/>
    </location>
    <ligand>
        <name>substrate</name>
    </ligand>
</feature>
<feature type="binding site" evidence="2">
    <location>
        <position position="165"/>
    </location>
    <ligand>
        <name>Ca(2+)</name>
        <dbReference type="ChEBI" id="CHEBI:29108"/>
    </ligand>
</feature>
<feature type="binding site" evidence="1">
    <location>
        <begin position="180"/>
        <end position="182"/>
    </location>
    <ligand>
        <name>substrate</name>
    </ligand>
</feature>
<feature type="binding site" evidence="2">
    <location>
        <position position="287"/>
    </location>
    <ligand>
        <name>Ca(2+)</name>
        <dbReference type="ChEBI" id="CHEBI:29108"/>
    </ligand>
</feature>
<feature type="site" description="Important for catalytic activity, responsible for pKa modulation of the active site Glu and correct orientation of both the proton donor and substrate" evidence="7">
    <location>
        <position position="163"/>
    </location>
</feature>
<feature type="mutagenesis site" description="Decrease in binding affinity." evidence="5">
    <original>H</original>
    <variation>A</variation>
    <location>
        <position position="43"/>
    </location>
</feature>
<feature type="mutagenesis site" description="Loss of arabinanase activity." evidence="5">
    <original>D</original>
    <variation>A</variation>
    <location>
        <position position="44"/>
    </location>
</feature>
<feature type="mutagenesis site" description="Significantly less active (10000-fold) than the wild-type arabinanase against both linear arabinan and arabinooligosaccharides." evidence="5">
    <original>W</original>
    <variation>A</variation>
    <location>
        <position position="104"/>
    </location>
</feature>
<feature type="mutagenesis site" description="Increase in binding affinity." evidence="5">
    <original>F</original>
    <variation>A</variation>
    <location>
        <position position="124"/>
    </location>
</feature>
<feature type="mutagenesis site" description="Loss of arabinanase activity." evidence="5">
    <original>D</original>
    <variation>A</variation>
    <location>
        <position position="163"/>
    </location>
</feature>
<feature type="mutagenesis site" description="Significantly less active than the wild-type arabinanase against both linear arabinan (50-fold) and the arabinooligosaccharides (1000-fold)." evidence="5">
    <original>F</original>
    <variation>A</variation>
    <location>
        <position position="181"/>
    </location>
</feature>
<feature type="mutagenesis site" description="Same binding affinity as wild-type." evidence="5">
    <original>W</original>
    <variation>A</variation>
    <location>
        <position position="182"/>
    </location>
</feature>
<feature type="mutagenesis site" description="Loss of arabinanase activity." evidence="4 5">
    <original>E</original>
    <variation>A</variation>
    <location>
        <position position="215"/>
    </location>
</feature>
<feature type="sequence conflict" description="In Ref. 1; CAA99586." evidence="6" ref="1">
    <original>G</original>
    <variation>D</variation>
    <location>
        <position position="172"/>
    </location>
</feature>
<feature type="strand" evidence="8">
    <location>
        <begin position="34"/>
        <end position="41"/>
    </location>
</feature>
<feature type="strand" evidence="8">
    <location>
        <begin position="46"/>
        <end position="50"/>
    </location>
</feature>
<feature type="strand" evidence="8">
    <location>
        <begin position="53"/>
        <end position="59"/>
    </location>
</feature>
<feature type="strand" evidence="8">
    <location>
        <begin position="64"/>
        <end position="77"/>
    </location>
</feature>
<feature type="strand" evidence="8">
    <location>
        <begin position="79"/>
        <end position="84"/>
    </location>
</feature>
<feature type="helix" evidence="8">
    <location>
        <begin position="90"/>
        <end position="94"/>
    </location>
</feature>
<feature type="strand" evidence="8">
    <location>
        <begin position="104"/>
        <end position="111"/>
    </location>
</feature>
<feature type="strand" evidence="8">
    <location>
        <begin position="114"/>
        <end position="121"/>
    </location>
</feature>
<feature type="strand" evidence="8">
    <location>
        <begin position="129"/>
        <end position="137"/>
    </location>
</feature>
<feature type="turn" evidence="8">
    <location>
        <begin position="139"/>
        <end position="142"/>
    </location>
</feature>
<feature type="strand" evidence="8">
    <location>
        <begin position="145"/>
        <end position="153"/>
    </location>
</feature>
<feature type="strand" evidence="8">
    <location>
        <begin position="157"/>
        <end position="159"/>
    </location>
</feature>
<feature type="strand" evidence="8">
    <location>
        <begin position="165"/>
        <end position="168"/>
    </location>
</feature>
<feature type="strand" evidence="8">
    <location>
        <begin position="174"/>
        <end position="178"/>
    </location>
</feature>
<feature type="strand" evidence="8">
    <location>
        <begin position="185"/>
        <end position="190"/>
    </location>
</feature>
<feature type="turn" evidence="8">
    <location>
        <begin position="192"/>
        <end position="194"/>
    </location>
</feature>
<feature type="strand" evidence="8">
    <location>
        <begin position="196"/>
        <end position="205"/>
    </location>
</feature>
<feature type="turn" evidence="8">
    <location>
        <begin position="208"/>
        <end position="212"/>
    </location>
</feature>
<feature type="strand" evidence="8">
    <location>
        <begin position="214"/>
        <end position="222"/>
    </location>
</feature>
<feature type="strand" evidence="8">
    <location>
        <begin position="225"/>
        <end position="233"/>
    </location>
</feature>
<feature type="strand" evidence="8">
    <location>
        <begin position="235"/>
        <end position="239"/>
    </location>
</feature>
<feature type="strand" evidence="8">
    <location>
        <begin position="242"/>
        <end position="252"/>
    </location>
</feature>
<feature type="helix" evidence="8">
    <location>
        <begin position="265"/>
        <end position="267"/>
    </location>
</feature>
<feature type="strand" evidence="8">
    <location>
        <begin position="271"/>
        <end position="274"/>
    </location>
</feature>
<feature type="strand" evidence="8">
    <location>
        <begin position="278"/>
        <end position="289"/>
    </location>
</feature>
<feature type="turn" evidence="8">
    <location>
        <begin position="290"/>
        <end position="292"/>
    </location>
</feature>
<feature type="strand" evidence="8">
    <location>
        <begin position="293"/>
        <end position="300"/>
    </location>
</feature>
<feature type="turn" evidence="8">
    <location>
        <begin position="301"/>
        <end position="305"/>
    </location>
</feature>
<feature type="strand" evidence="8">
    <location>
        <begin position="307"/>
        <end position="313"/>
    </location>
</feature>
<evidence type="ECO:0000250" key="1"/>
<evidence type="ECO:0000255" key="2"/>
<evidence type="ECO:0000269" key="3">
    <source>
    </source>
</evidence>
<evidence type="ECO:0000269" key="4">
    <source>
    </source>
</evidence>
<evidence type="ECO:0000269" key="5">
    <source>
    </source>
</evidence>
<evidence type="ECO:0000305" key="6"/>
<evidence type="ECO:0000305" key="7">
    <source>
    </source>
</evidence>
<evidence type="ECO:0007829" key="8">
    <source>
        <dbReference type="PDB" id="1UV4"/>
    </source>
</evidence>
<proteinExistence type="evidence at protein level"/>
<dbReference type="EC" id="3.2.1.99"/>
<dbReference type="EMBL" id="Z75208">
    <property type="protein sequence ID" value="CAA99586.1"/>
    <property type="status" value="ALT_FRAME"/>
    <property type="molecule type" value="Genomic_DNA"/>
</dbReference>
<dbReference type="EMBL" id="AY669857">
    <property type="protein sequence ID" value="AAV87172.1"/>
    <property type="molecule type" value="Genomic_DNA"/>
</dbReference>
<dbReference type="EMBL" id="AL009126">
    <property type="protein sequence ID" value="CAB14841.2"/>
    <property type="molecule type" value="Genomic_DNA"/>
</dbReference>
<dbReference type="PIR" id="E69580">
    <property type="entry name" value="E69580"/>
</dbReference>
<dbReference type="RefSeq" id="NP_390759.2">
    <property type="nucleotide sequence ID" value="NC_000964.3"/>
</dbReference>
<dbReference type="RefSeq" id="WP_003229496.1">
    <property type="nucleotide sequence ID" value="NZ_OZ025638.1"/>
</dbReference>
<dbReference type="PDB" id="1UV4">
    <property type="method" value="X-ray"/>
    <property type="resolution" value="1.50 A"/>
    <property type="chains" value="A=31-323"/>
</dbReference>
<dbReference type="PDBsum" id="1UV4"/>
<dbReference type="SMR" id="P94522"/>
<dbReference type="FunCoup" id="P94522">
    <property type="interactions" value="67"/>
</dbReference>
<dbReference type="STRING" id="224308.BSU28810"/>
<dbReference type="CAZy" id="GH43">
    <property type="family name" value="Glycoside Hydrolase Family 43"/>
</dbReference>
<dbReference type="PaxDb" id="224308-BSU28810"/>
<dbReference type="EnsemblBacteria" id="CAB14841">
    <property type="protein sequence ID" value="CAB14841"/>
    <property type="gene ID" value="BSU_28810"/>
</dbReference>
<dbReference type="GeneID" id="937430"/>
<dbReference type="KEGG" id="bsu:BSU28810"/>
<dbReference type="PATRIC" id="fig|224308.179.peg.3129"/>
<dbReference type="eggNOG" id="COG3507">
    <property type="taxonomic scope" value="Bacteria"/>
</dbReference>
<dbReference type="InParanoid" id="P94522"/>
<dbReference type="OrthoDB" id="9801455at2"/>
<dbReference type="PhylomeDB" id="P94522"/>
<dbReference type="BioCyc" id="BSUB:BSU28810-MONOMER"/>
<dbReference type="BioCyc" id="MetaCyc:BSU28810-MONOMER"/>
<dbReference type="SABIO-RK" id="P94522"/>
<dbReference type="UniPathway" id="UPA00667"/>
<dbReference type="EvolutionaryTrace" id="P94522"/>
<dbReference type="Proteomes" id="UP000001570">
    <property type="component" value="Chromosome"/>
</dbReference>
<dbReference type="GO" id="GO:0005576">
    <property type="term" value="C:extracellular region"/>
    <property type="evidence" value="ECO:0007669"/>
    <property type="project" value="UniProtKB-SubCell"/>
</dbReference>
<dbReference type="GO" id="GO:0046558">
    <property type="term" value="F:arabinan endo-1,5-alpha-L-arabinosidase activity"/>
    <property type="evidence" value="ECO:0007669"/>
    <property type="project" value="UniProtKB-EC"/>
</dbReference>
<dbReference type="GO" id="GO:0046872">
    <property type="term" value="F:metal ion binding"/>
    <property type="evidence" value="ECO:0007669"/>
    <property type="project" value="UniProtKB-KW"/>
</dbReference>
<dbReference type="GO" id="GO:0031222">
    <property type="term" value="P:arabinan catabolic process"/>
    <property type="evidence" value="ECO:0007669"/>
    <property type="project" value="UniProtKB-UniPathway"/>
</dbReference>
<dbReference type="CDD" id="cd18829">
    <property type="entry name" value="GH43_BsArb43A-like"/>
    <property type="match status" value="1"/>
</dbReference>
<dbReference type="Gene3D" id="2.115.10.20">
    <property type="entry name" value="Glycosyl hydrolase domain, family 43"/>
    <property type="match status" value="1"/>
</dbReference>
<dbReference type="InterPro" id="IPR050727">
    <property type="entry name" value="GH43_arabinanases"/>
</dbReference>
<dbReference type="InterPro" id="IPR006710">
    <property type="entry name" value="Glyco_hydro_43"/>
</dbReference>
<dbReference type="InterPro" id="IPR016840">
    <property type="entry name" value="Glyco_hydro_43_endo_a_Ara-ase"/>
</dbReference>
<dbReference type="InterPro" id="IPR023296">
    <property type="entry name" value="Glyco_hydro_beta-prop_sf"/>
</dbReference>
<dbReference type="PANTHER" id="PTHR43301">
    <property type="entry name" value="ARABINAN ENDO-1,5-ALPHA-L-ARABINOSIDASE"/>
    <property type="match status" value="1"/>
</dbReference>
<dbReference type="PANTHER" id="PTHR43301:SF3">
    <property type="entry name" value="ARABINAN ENDO-1,5-ALPHA-L-ARABINOSIDASE A-RELATED"/>
    <property type="match status" value="1"/>
</dbReference>
<dbReference type="Pfam" id="PF04616">
    <property type="entry name" value="Glyco_hydro_43"/>
    <property type="match status" value="1"/>
</dbReference>
<dbReference type="PIRSF" id="PIRSF026534">
    <property type="entry name" value="Endo_alpha-L-arabinosidase"/>
    <property type="match status" value="1"/>
</dbReference>
<dbReference type="SUPFAM" id="SSF75005">
    <property type="entry name" value="Arabinanase/levansucrase/invertase"/>
    <property type="match status" value="1"/>
</dbReference>
<sequence length="323" mass="35446">MKKKKTWKRFLHFSSAALAAGLIFTSAAPAEAAFWGASNELLHDPTMIKEGSSWYALGTGLTEERGLRVLKSSDAKNWTVQKSIFTTPLSWWSNYVPNYGQNQWAPDIQYYNGKYWLYYSVSSFGSNTSAIGLASSTSISSGGWKDEGLVIRSTSSNNYNAIDPELTFDKDGNPWLAFGSFWSGIKLTKLDKSTMKPTGSLYSIAARPNNGGALEAPTLTYQNGYYYLMVSFDKCCDGVNSTYKIAYGRSKSITGPYLDKSGKSMLEGGGTILDSGNDQWKGPGGQDIVNGNILVRHAYDANDNGIPKLLINDLNWSSGWPSY</sequence>
<gene>
    <name type="primary">abnA</name>
    <name type="ordered locus">BSU28810</name>
</gene>
<accession>P94522</accession>
<accession>Q5MPF4</accession>
<accession>Q795W7</accession>
<protein>
    <recommendedName>
        <fullName>Extracellular endo-alpha-(1-&gt;5)-L-arabinanase 1</fullName>
        <shortName>ABN</shortName>
        <ecNumber>3.2.1.99</ecNumber>
    </recommendedName>
    <alternativeName>
        <fullName>Endo-1,5-alpha-L-arabinanase</fullName>
    </alternativeName>
</protein>
<keyword id="KW-0002">3D-structure</keyword>
<keyword id="KW-0106">Calcium</keyword>
<keyword id="KW-0119">Carbohydrate metabolism</keyword>
<keyword id="KW-0903">Direct protein sequencing</keyword>
<keyword id="KW-0326">Glycosidase</keyword>
<keyword id="KW-0378">Hydrolase</keyword>
<keyword id="KW-0479">Metal-binding</keyword>
<keyword id="KW-1185">Reference proteome</keyword>
<keyword id="KW-0964">Secreted</keyword>
<keyword id="KW-0732">Signal</keyword>
<reference key="1">
    <citation type="journal article" date="1996" name="Microbiology">
        <title>The dnaB-pheA (256 degrees-240 degrees) region of the Bacillus subtilis chromosome containing genes responsible for stress responses, the utilization of plant cell walls and primary metabolism.</title>
        <authorList>
            <person name="Wipat A."/>
            <person name="Carter N."/>
            <person name="Brignell C.S."/>
            <person name="Guy J.B."/>
            <person name="Piper K."/>
            <person name="Sanders J."/>
            <person name="Emmerson P.T."/>
            <person name="Harwood C.R."/>
        </authorList>
    </citation>
    <scope>NUCLEOTIDE SEQUENCE [GENOMIC DNA]</scope>
    <source>
        <strain>168</strain>
    </source>
</reference>
<reference key="2">
    <citation type="journal article" date="2004" name="FEMS Microbiol. Lett.">
        <title>Purification, characterization and functional analysis of an endo-arabinanase (AbnA) from Bacillus subtilis.</title>
        <authorList>
            <person name="Leal T.F."/>
            <person name="de Sa-Nogueira I."/>
        </authorList>
    </citation>
    <scope>NUCLEOTIDE SEQUENCE [GENOMIC DNA]</scope>
    <scope>PROTEIN SEQUENCE OF 33-37</scope>
    <scope>FUNCTION</scope>
    <scope>CATALYTIC ACTIVITY</scope>
    <scope>MUTAGENESIS OF GLU-215</scope>
    <scope>DISRUPTION PHENOTYPE</scope>
    <scope>BIOPHYSICOCHEMICAL PROPERTIES</scope>
    <scope>SUBCELLULAR LOCATION</scope>
    <scope>SUBSTRATE SPECIFICITY</scope>
    <source>
        <strain>168</strain>
    </source>
</reference>
<reference key="3">
    <citation type="journal article" date="1997" name="Nature">
        <title>The complete genome sequence of the Gram-positive bacterium Bacillus subtilis.</title>
        <authorList>
            <person name="Kunst F."/>
            <person name="Ogasawara N."/>
            <person name="Moszer I."/>
            <person name="Albertini A.M."/>
            <person name="Alloni G."/>
            <person name="Azevedo V."/>
            <person name="Bertero M.G."/>
            <person name="Bessieres P."/>
            <person name="Bolotin A."/>
            <person name="Borchert S."/>
            <person name="Borriss R."/>
            <person name="Boursier L."/>
            <person name="Brans A."/>
            <person name="Braun M."/>
            <person name="Brignell S.C."/>
            <person name="Bron S."/>
            <person name="Brouillet S."/>
            <person name="Bruschi C.V."/>
            <person name="Caldwell B."/>
            <person name="Capuano V."/>
            <person name="Carter N.M."/>
            <person name="Choi S.-K."/>
            <person name="Codani J.-J."/>
            <person name="Connerton I.F."/>
            <person name="Cummings N.J."/>
            <person name="Daniel R.A."/>
            <person name="Denizot F."/>
            <person name="Devine K.M."/>
            <person name="Duesterhoeft A."/>
            <person name="Ehrlich S.D."/>
            <person name="Emmerson P.T."/>
            <person name="Entian K.-D."/>
            <person name="Errington J."/>
            <person name="Fabret C."/>
            <person name="Ferrari E."/>
            <person name="Foulger D."/>
            <person name="Fritz C."/>
            <person name="Fujita M."/>
            <person name="Fujita Y."/>
            <person name="Fuma S."/>
            <person name="Galizzi A."/>
            <person name="Galleron N."/>
            <person name="Ghim S.-Y."/>
            <person name="Glaser P."/>
            <person name="Goffeau A."/>
            <person name="Golightly E.J."/>
            <person name="Grandi G."/>
            <person name="Guiseppi G."/>
            <person name="Guy B.J."/>
            <person name="Haga K."/>
            <person name="Haiech J."/>
            <person name="Harwood C.R."/>
            <person name="Henaut A."/>
            <person name="Hilbert H."/>
            <person name="Holsappel S."/>
            <person name="Hosono S."/>
            <person name="Hullo M.-F."/>
            <person name="Itaya M."/>
            <person name="Jones L.-M."/>
            <person name="Joris B."/>
            <person name="Karamata D."/>
            <person name="Kasahara Y."/>
            <person name="Klaerr-Blanchard M."/>
            <person name="Klein C."/>
            <person name="Kobayashi Y."/>
            <person name="Koetter P."/>
            <person name="Koningstein G."/>
            <person name="Krogh S."/>
            <person name="Kumano M."/>
            <person name="Kurita K."/>
            <person name="Lapidus A."/>
            <person name="Lardinois S."/>
            <person name="Lauber J."/>
            <person name="Lazarevic V."/>
            <person name="Lee S.-M."/>
            <person name="Levine A."/>
            <person name="Liu H."/>
            <person name="Masuda S."/>
            <person name="Mauel C."/>
            <person name="Medigue C."/>
            <person name="Medina N."/>
            <person name="Mellado R.P."/>
            <person name="Mizuno M."/>
            <person name="Moestl D."/>
            <person name="Nakai S."/>
            <person name="Noback M."/>
            <person name="Noone D."/>
            <person name="O'Reilly M."/>
            <person name="Ogawa K."/>
            <person name="Ogiwara A."/>
            <person name="Oudega B."/>
            <person name="Park S.-H."/>
            <person name="Parro V."/>
            <person name="Pohl T.M."/>
            <person name="Portetelle D."/>
            <person name="Porwollik S."/>
            <person name="Prescott A.M."/>
            <person name="Presecan E."/>
            <person name="Pujic P."/>
            <person name="Purnelle B."/>
            <person name="Rapoport G."/>
            <person name="Rey M."/>
            <person name="Reynolds S."/>
            <person name="Rieger M."/>
            <person name="Rivolta C."/>
            <person name="Rocha E."/>
            <person name="Roche B."/>
            <person name="Rose M."/>
            <person name="Sadaie Y."/>
            <person name="Sato T."/>
            <person name="Scanlan E."/>
            <person name="Schleich S."/>
            <person name="Schroeter R."/>
            <person name="Scoffone F."/>
            <person name="Sekiguchi J."/>
            <person name="Sekowska A."/>
            <person name="Seror S.J."/>
            <person name="Serror P."/>
            <person name="Shin B.-S."/>
            <person name="Soldo B."/>
            <person name="Sorokin A."/>
            <person name="Tacconi E."/>
            <person name="Takagi T."/>
            <person name="Takahashi H."/>
            <person name="Takemaru K."/>
            <person name="Takeuchi M."/>
            <person name="Tamakoshi A."/>
            <person name="Tanaka T."/>
            <person name="Terpstra P."/>
            <person name="Tognoni A."/>
            <person name="Tosato V."/>
            <person name="Uchiyama S."/>
            <person name="Vandenbol M."/>
            <person name="Vannier F."/>
            <person name="Vassarotti A."/>
            <person name="Viari A."/>
            <person name="Wambutt R."/>
            <person name="Wedler E."/>
            <person name="Wedler H."/>
            <person name="Weitzenegger T."/>
            <person name="Winters P."/>
            <person name="Wipat A."/>
            <person name="Yamamoto H."/>
            <person name="Yamane K."/>
            <person name="Yasumoto K."/>
            <person name="Yata K."/>
            <person name="Yoshida K."/>
            <person name="Yoshikawa H.-F."/>
            <person name="Zumstein E."/>
            <person name="Yoshikawa H."/>
            <person name="Danchin A."/>
        </authorList>
    </citation>
    <scope>NUCLEOTIDE SEQUENCE [LARGE SCALE GENOMIC DNA]</scope>
    <source>
        <strain>168</strain>
    </source>
</reference>
<reference key="4">
    <citation type="journal article" date="2009" name="Microbiology">
        <title>From a consortium sequence to a unified sequence: the Bacillus subtilis 168 reference genome a decade later.</title>
        <authorList>
            <person name="Barbe V."/>
            <person name="Cruveiller S."/>
            <person name="Kunst F."/>
            <person name="Lenoble P."/>
            <person name="Meurice G."/>
            <person name="Sekowska A."/>
            <person name="Vallenet D."/>
            <person name="Wang T."/>
            <person name="Moszer I."/>
            <person name="Medigue C."/>
            <person name="Danchin A."/>
        </authorList>
    </citation>
    <scope>SEQUENCE REVISION TO 172 AND C-TERMINUS</scope>
</reference>
<reference key="5">
    <citation type="journal article" date="2004" name="J. Bacteriol.">
        <title>Transcriptional regulation of genes encoding arabinan-degrading enzymes in Bacillus subtilis.</title>
        <authorList>
            <person name="Raposo M.P."/>
            <person name="Inacio J.M."/>
            <person name="Mota L.J."/>
            <person name="de Sa-Nogueira I."/>
        </authorList>
    </citation>
    <scope>FUNCTION</scope>
    <scope>DISRUPTION PHENOTYPE</scope>
    <scope>INDUCTION</scope>
    <source>
        <strain>168</strain>
    </source>
</reference>
<reference key="6">
    <citation type="journal article" date="2005" name="Proc. Natl. Acad. Sci. U.S.A.">
        <title>Tailored catalysts for plant cell-wall degradation: redesigning the exo/endo preference of Cellvibrio japonicus arabinanase 43A.</title>
        <authorList>
            <person name="Proctor M.R."/>
            <person name="Taylor E.J."/>
            <person name="Nurizzo D."/>
            <person name="Turkenburg J.P."/>
            <person name="Lloyd R.M."/>
            <person name="Vardakou M."/>
            <person name="Davies G.J."/>
            <person name="Gilbert H.J."/>
        </authorList>
    </citation>
    <scope>X-RAY CRYSTALLOGRAPHY (1.5 ANGSTROMS) OF 31-323 IN COMPLEX WITH CALCIUM IONS</scope>
    <scope>FUNCTION</scope>
    <scope>BIOPHYSICOCHEMICAL PROPERTIES</scope>
    <scope>MUTAGENESIS OF HIS-43; ASP-44; TRP-104; PHE-124; ASP-163; PHE-181; TRP-182 AND GLU-215</scope>
    <scope>COFACTOR</scope>
    <scope>SUBSTRATE SPECIFICITY</scope>
</reference>
<comment type="function">
    <text evidence="3 4 5">Involved in the degradation of arabinan and is a key enzyme in the complete degradation of the plant cell wall. Catalyzes the internal cleavage of alpha-(1-&gt;5)-L-arabinofuranosyl residues of linear 1,5-alpha-L-arabinan and of branched sugar beet arabinan. It displays no activity against heavily substituted arabinans or a range of other polysaccharides (larch wood arabinogalactan, wheat arabinoxylan and p-nitrophenyl-alpha-L-arabinofuranoside). The enzyme activity is progressively reduced as alpha-(1-&gt;5)-chains become shorter or more highly substituted.</text>
</comment>
<comment type="catalytic activity">
    <reaction evidence="4">
        <text>Endohydrolysis of (1-&gt;5)-alpha-arabinofuranosidic linkages in (1-&gt;5)-arabinans.</text>
        <dbReference type="EC" id="3.2.1.99"/>
    </reaction>
</comment>
<comment type="cofactor">
    <cofactor evidence="6">
        <name>Ca(2+)</name>
        <dbReference type="ChEBI" id="CHEBI:29108"/>
    </cofactor>
    <text evidence="6">Binds 1 Ca(2+) ion per subunit.</text>
</comment>
<comment type="biophysicochemical properties">
    <kinetics>
        <KM evidence="4 5">3.5 mM for arabinotetraose (at 27 degrees Celsius and pH 7)</KM>
        <KM evidence="4 5">5.92 mM for linear 1,5-alpha-L-arabinan (at 37 degrees Celsius and pH 6.6)</KM>
        <Vmax evidence="4 5">1.31 mmol/min/mg enzyme (at 37 degrees Celsius and pH 6.6)</Vmax>
    </kinetics>
    <phDependence>
        <text evidence="4 5">Optimum pH is 6.0. At pH 4.0 the arabinosidase retains about 8% of activity.</text>
    </phDependence>
    <temperatureDependence>
        <text evidence="4 5">Optimum temperature is 60 degrees Celsius. At 80 degrees Celsius retains about 2% of activity.</text>
    </temperatureDependence>
</comment>
<comment type="pathway">
    <text>Glycan metabolism; L-arabinan degradation.</text>
</comment>
<comment type="subcellular location">
    <subcellularLocation>
        <location evidence="4">Secreted</location>
    </subcellularLocation>
</comment>
<comment type="induction">
    <text evidence="3">Induced by arabinose and arabina,n and repressed by glucose.</text>
</comment>
<comment type="disruption phenotype">
    <text evidence="3 4">Cells lacking this gene retains about 40% of the capacity to hydrolyze linear arabinan compared to the wild-type.</text>
</comment>
<comment type="similarity">
    <text evidence="6">Belongs to the glycosyl hydrolase 43 family.</text>
</comment>
<comment type="sequence caution" evidence="6">
    <conflict type="frameshift">
        <sequence resource="EMBL-CDS" id="CAA99586"/>
    </conflict>
</comment>
<organism>
    <name type="scientific">Bacillus subtilis (strain 168)</name>
    <dbReference type="NCBI Taxonomy" id="224308"/>
    <lineage>
        <taxon>Bacteria</taxon>
        <taxon>Bacillati</taxon>
        <taxon>Bacillota</taxon>
        <taxon>Bacilli</taxon>
        <taxon>Bacillales</taxon>
        <taxon>Bacillaceae</taxon>
        <taxon>Bacillus</taxon>
    </lineage>
</organism>